<name>STRAP_CHICK</name>
<feature type="chain" id="PRO_0000313796" description="Serine-threonine kinase receptor-associated protein">
    <location>
        <begin position="1"/>
        <end position="350"/>
    </location>
</feature>
<feature type="repeat" description="WD 1">
    <location>
        <begin position="12"/>
        <end position="56"/>
    </location>
</feature>
<feature type="repeat" description="WD 2">
    <location>
        <begin position="57"/>
        <end position="96"/>
    </location>
</feature>
<feature type="repeat" description="WD 3">
    <location>
        <begin position="98"/>
        <end position="137"/>
    </location>
</feature>
<feature type="repeat" description="WD 4">
    <location>
        <begin position="141"/>
        <end position="179"/>
    </location>
</feature>
<feature type="repeat" description="WD 5">
    <location>
        <begin position="180"/>
        <end position="212"/>
    </location>
</feature>
<feature type="repeat" description="WD 6">
    <location>
        <begin position="221"/>
        <end position="262"/>
    </location>
</feature>
<feature type="repeat" description="WD 7">
    <location>
        <begin position="263"/>
        <end position="302"/>
    </location>
</feature>
<feature type="region of interest" description="Disordered" evidence="3">
    <location>
        <begin position="311"/>
        <end position="350"/>
    </location>
</feature>
<feature type="compositionally biased region" description="Polar residues" evidence="3">
    <location>
        <begin position="335"/>
        <end position="350"/>
    </location>
</feature>
<dbReference type="EMBL" id="AJ719901">
    <property type="protein sequence ID" value="CAG31560.1"/>
    <property type="status" value="ALT_INIT"/>
    <property type="molecule type" value="mRNA"/>
</dbReference>
<dbReference type="RefSeq" id="NP_001006247.2">
    <property type="nucleotide sequence ID" value="NM_001006247.3"/>
</dbReference>
<dbReference type="SMR" id="Q5ZL33"/>
<dbReference type="FunCoup" id="Q5ZL33">
    <property type="interactions" value="2676"/>
</dbReference>
<dbReference type="STRING" id="9031.ENSGALP00000021343"/>
<dbReference type="PaxDb" id="9031-ENSGALP00000021343"/>
<dbReference type="Ensembl" id="ENSGALT00010030982.1">
    <property type="protein sequence ID" value="ENSGALP00010018003.1"/>
    <property type="gene ID" value="ENSGALG00010012908.1"/>
</dbReference>
<dbReference type="GeneID" id="418175"/>
<dbReference type="KEGG" id="gga:418175"/>
<dbReference type="CTD" id="11171"/>
<dbReference type="VEuPathDB" id="HostDB:geneid_418175"/>
<dbReference type="eggNOG" id="KOG0278">
    <property type="taxonomic scope" value="Eukaryota"/>
</dbReference>
<dbReference type="GeneTree" id="ENSGT00940000155197"/>
<dbReference type="HOGENOM" id="CLU_000288_57_6_1"/>
<dbReference type="InParanoid" id="Q5ZL33"/>
<dbReference type="OMA" id="DGFYGLW"/>
<dbReference type="OrthoDB" id="200206at2759"/>
<dbReference type="PhylomeDB" id="Q5ZL33"/>
<dbReference type="TreeFam" id="TF323287"/>
<dbReference type="Reactome" id="R-GGA-2173788">
    <property type="pathway name" value="Downregulation of TGF-beta receptor signaling"/>
</dbReference>
<dbReference type="PRO" id="PR:Q5ZL33"/>
<dbReference type="Proteomes" id="UP000000539">
    <property type="component" value="Chromosome 1"/>
</dbReference>
<dbReference type="Bgee" id="ENSGALG00000013092">
    <property type="expression patterns" value="Expressed in spermatid and 14 other cell types or tissues"/>
</dbReference>
<dbReference type="GO" id="GO:0005829">
    <property type="term" value="C:cytosol"/>
    <property type="evidence" value="ECO:0000250"/>
    <property type="project" value="UniProtKB"/>
</dbReference>
<dbReference type="GO" id="GO:0005634">
    <property type="term" value="C:nucleus"/>
    <property type="evidence" value="ECO:0007669"/>
    <property type="project" value="UniProtKB-SubCell"/>
</dbReference>
<dbReference type="GO" id="GO:0032797">
    <property type="term" value="C:SMN complex"/>
    <property type="evidence" value="ECO:0000250"/>
    <property type="project" value="UniProtKB"/>
</dbReference>
<dbReference type="GO" id="GO:0034719">
    <property type="term" value="C:SMN-Sm protein complex"/>
    <property type="evidence" value="ECO:0000250"/>
    <property type="project" value="UniProtKB"/>
</dbReference>
<dbReference type="GO" id="GO:0003729">
    <property type="term" value="F:mRNA binding"/>
    <property type="evidence" value="ECO:0007669"/>
    <property type="project" value="Ensembl"/>
</dbReference>
<dbReference type="GO" id="GO:0003723">
    <property type="term" value="F:RNA binding"/>
    <property type="evidence" value="ECO:0000318"/>
    <property type="project" value="GO_Central"/>
</dbReference>
<dbReference type="GO" id="GO:0005102">
    <property type="term" value="F:signaling receptor binding"/>
    <property type="evidence" value="ECO:0000250"/>
    <property type="project" value="AgBase"/>
</dbReference>
<dbReference type="GO" id="GO:1990447">
    <property type="term" value="F:U2 snRNP binding"/>
    <property type="evidence" value="ECO:0007669"/>
    <property type="project" value="Ensembl"/>
</dbReference>
<dbReference type="GO" id="GO:0000380">
    <property type="term" value="P:alternative mRNA splicing, via spliceosome"/>
    <property type="evidence" value="ECO:0007669"/>
    <property type="project" value="Ensembl"/>
</dbReference>
<dbReference type="GO" id="GO:0030277">
    <property type="term" value="P:maintenance of gastrointestinal epithelium"/>
    <property type="evidence" value="ECO:0007669"/>
    <property type="project" value="Ensembl"/>
</dbReference>
<dbReference type="GO" id="GO:0000122">
    <property type="term" value="P:negative regulation of transcription by RNA polymerase II"/>
    <property type="evidence" value="ECO:0000250"/>
    <property type="project" value="AgBase"/>
</dbReference>
<dbReference type="GO" id="GO:0030512">
    <property type="term" value="P:negative regulation of transforming growth factor beta receptor signaling pathway"/>
    <property type="evidence" value="ECO:0000250"/>
    <property type="project" value="AgBase"/>
</dbReference>
<dbReference type="GO" id="GO:0030182">
    <property type="term" value="P:neuron differentiation"/>
    <property type="evidence" value="ECO:0007669"/>
    <property type="project" value="Ensembl"/>
</dbReference>
<dbReference type="GO" id="GO:0000387">
    <property type="term" value="P:spliceosomal snRNP assembly"/>
    <property type="evidence" value="ECO:0000250"/>
    <property type="project" value="UniProtKB"/>
</dbReference>
<dbReference type="CDD" id="cd00200">
    <property type="entry name" value="WD40"/>
    <property type="match status" value="1"/>
</dbReference>
<dbReference type="FunFam" id="2.130.10.10:FF:000133">
    <property type="entry name" value="Serine-threonine kinase receptor-associated protein"/>
    <property type="match status" value="1"/>
</dbReference>
<dbReference type="Gene3D" id="2.130.10.10">
    <property type="entry name" value="YVTN repeat-like/Quinoprotein amine dehydrogenase"/>
    <property type="match status" value="1"/>
</dbReference>
<dbReference type="InterPro" id="IPR020472">
    <property type="entry name" value="G-protein_beta_WD-40_rep"/>
</dbReference>
<dbReference type="InterPro" id="IPR015943">
    <property type="entry name" value="WD40/YVTN_repeat-like_dom_sf"/>
</dbReference>
<dbReference type="InterPro" id="IPR036322">
    <property type="entry name" value="WD40_repeat_dom_sf"/>
</dbReference>
<dbReference type="InterPro" id="IPR001680">
    <property type="entry name" value="WD40_rpt"/>
</dbReference>
<dbReference type="PANTHER" id="PTHR19877">
    <property type="entry name" value="EUKARYOTIC TRANSLATION INITIATION FACTOR 3 SUBUNIT I"/>
    <property type="match status" value="1"/>
</dbReference>
<dbReference type="PANTHER" id="PTHR19877:SF13">
    <property type="entry name" value="SERINE-THREONINE KINASE RECEPTOR-ASSOCIATED PROTEIN"/>
    <property type="match status" value="1"/>
</dbReference>
<dbReference type="Pfam" id="PF00400">
    <property type="entry name" value="WD40"/>
    <property type="match status" value="5"/>
</dbReference>
<dbReference type="PRINTS" id="PR00320">
    <property type="entry name" value="GPROTEINBRPT"/>
</dbReference>
<dbReference type="SMART" id="SM00320">
    <property type="entry name" value="WD40"/>
    <property type="match status" value="6"/>
</dbReference>
<dbReference type="SUPFAM" id="SSF50978">
    <property type="entry name" value="WD40 repeat-like"/>
    <property type="match status" value="1"/>
</dbReference>
<dbReference type="PROSITE" id="PS00678">
    <property type="entry name" value="WD_REPEATS_1"/>
    <property type="match status" value="1"/>
</dbReference>
<dbReference type="PROSITE" id="PS50082">
    <property type="entry name" value="WD_REPEATS_2"/>
    <property type="match status" value="4"/>
</dbReference>
<dbReference type="PROSITE" id="PS50294">
    <property type="entry name" value="WD_REPEATS_REGION"/>
    <property type="match status" value="1"/>
</dbReference>
<comment type="function">
    <text evidence="2">The SMN complex catalyzes the assembly of small nuclear ribonucleoproteins (snRNPs), the building blocks of the spliceosome, and thereby plays an important role in the splicing of cellular pre-mRNAs. Most spliceosomal snRNPs contain a common set of Sm proteins SNRPB, SNRPD1, SNRPD2, SNRPD3, SNRPE, SNRPF and SNRPG that assemble in a heptameric protein ring on the Sm site of the small nuclear RNA to form the core snRNP (Sm core). In the cytosol, the Sm proteins SNRPD1, SNRPD2, SNRPE, SNRPF and SNRPG are trapped in an inactive 6S pICln-Sm complex by the chaperone CLNS1A that controls the assembly of the core snRNP. To assemble core snRNPs, the SMN complex accepts the trapped 5Sm proteins from CLNS1A forming an intermediate. Binding of snRNA inside 5Sm triggers eviction of the SMN complex, thereby allowing binding of SNRPD3 and SNRPB to complete assembly of the core snRNP. STRAP plays a role in the cellular distribution of the SMN complex (By similarity).</text>
</comment>
<comment type="subunit">
    <text evidence="2">Part of the core SMN complex.</text>
</comment>
<comment type="subcellular location">
    <subcellularLocation>
        <location evidence="1">Cytoplasm</location>
    </subcellularLocation>
    <subcellularLocation>
        <location evidence="1">Nucleus</location>
    </subcellularLocation>
    <text evidence="1">Localized predominantly in the cytoplasm but also found in the nucleus.</text>
</comment>
<comment type="similarity">
    <text evidence="4">Belongs to the WD repeat STRAP family.</text>
</comment>
<comment type="sequence caution" evidence="4">
    <conflict type="erroneous initiation">
        <sequence resource="EMBL-CDS" id="CAG31560"/>
    </conflict>
</comment>
<accession>Q5ZL33</accession>
<organism>
    <name type="scientific">Gallus gallus</name>
    <name type="common">Chicken</name>
    <dbReference type="NCBI Taxonomy" id="9031"/>
    <lineage>
        <taxon>Eukaryota</taxon>
        <taxon>Metazoa</taxon>
        <taxon>Chordata</taxon>
        <taxon>Craniata</taxon>
        <taxon>Vertebrata</taxon>
        <taxon>Euteleostomi</taxon>
        <taxon>Archelosauria</taxon>
        <taxon>Archosauria</taxon>
        <taxon>Dinosauria</taxon>
        <taxon>Saurischia</taxon>
        <taxon>Theropoda</taxon>
        <taxon>Coelurosauria</taxon>
        <taxon>Aves</taxon>
        <taxon>Neognathae</taxon>
        <taxon>Galloanserae</taxon>
        <taxon>Galliformes</taxon>
        <taxon>Phasianidae</taxon>
        <taxon>Phasianinae</taxon>
        <taxon>Gallus</taxon>
    </lineage>
</organism>
<reference key="1">
    <citation type="journal article" date="2005" name="Genome Biol.">
        <title>Full-length cDNAs from chicken bursal lymphocytes to facilitate gene function analysis.</title>
        <authorList>
            <person name="Caldwell R.B."/>
            <person name="Kierzek A.M."/>
            <person name="Arakawa H."/>
            <person name="Bezzubov Y."/>
            <person name="Zaim J."/>
            <person name="Fiedler P."/>
            <person name="Kutter S."/>
            <person name="Blagodatski A."/>
            <person name="Kostovska D."/>
            <person name="Koter M."/>
            <person name="Plachy J."/>
            <person name="Carninci P."/>
            <person name="Hayashizaki Y."/>
            <person name="Buerstedde J.-M."/>
        </authorList>
    </citation>
    <scope>NUCLEOTIDE SEQUENCE [LARGE SCALE MRNA]</scope>
    <source>
        <strain>CB</strain>
        <tissue>Bursa of Fabricius</tissue>
    </source>
</reference>
<protein>
    <recommendedName>
        <fullName>Serine-threonine kinase receptor-associated protein</fullName>
    </recommendedName>
</protein>
<sequence length="350" mass="38141">MAMRQTPLTCSGHTRPVVDLAFSGVTPYGYFLISACKDGKPMLRQGDTGDWIGTFLGHKGAVWGATLNKDATKAATAAADFTAKVWDAVSGDELITLAHKHIVKSVDFTQDSNYLLTGGQDKLLRIYDLSKPEAEPDVVSGHTSGIKKALWSSDDKQILSADDKTVRLWDRSTMTEVKALNVAMSVSSMEYVPEGQILVITYGKTIAFHSAETLEQIKSFEAPATINSASLHPEKECLVAGGEDFKLYKYDYNTGEELESYKGHFGPIHCVRFSPDGELYASGSEDGTLRLWQTTVGKTYGLWKCVVPEEENAEAAKARTTLPGTAEEEIEEVASENSDSVYSSTPEVKA</sequence>
<evidence type="ECO:0000250" key="1"/>
<evidence type="ECO:0000250" key="2">
    <source>
        <dbReference type="UniProtKB" id="Q9Y3F4"/>
    </source>
</evidence>
<evidence type="ECO:0000256" key="3">
    <source>
        <dbReference type="SAM" id="MobiDB-lite"/>
    </source>
</evidence>
<evidence type="ECO:0000305" key="4"/>
<keyword id="KW-0963">Cytoplasm</keyword>
<keyword id="KW-0507">mRNA processing</keyword>
<keyword id="KW-0508">mRNA splicing</keyword>
<keyword id="KW-0539">Nucleus</keyword>
<keyword id="KW-1185">Reference proteome</keyword>
<keyword id="KW-0677">Repeat</keyword>
<keyword id="KW-0853">WD repeat</keyword>
<proteinExistence type="evidence at transcript level"/>
<gene>
    <name type="primary">STRAP</name>
    <name type="ORF">RCJMB04_7p19</name>
</gene>